<dbReference type="EC" id="7.2.1.1" evidence="1"/>
<dbReference type="EMBL" id="AE001273">
    <property type="protein sequence ID" value="AAC67872.1"/>
    <property type="molecule type" value="Genomic_DNA"/>
</dbReference>
<dbReference type="PIR" id="D71535">
    <property type="entry name" value="D71535"/>
</dbReference>
<dbReference type="RefSeq" id="NP_219784.1">
    <property type="nucleotide sequence ID" value="NC_000117.1"/>
</dbReference>
<dbReference type="RefSeq" id="WP_009871626.1">
    <property type="nucleotide sequence ID" value="NC_000117.1"/>
</dbReference>
<dbReference type="SMR" id="O84281"/>
<dbReference type="STRING" id="272561.CT_279"/>
<dbReference type="EnsemblBacteria" id="AAC67872">
    <property type="protein sequence ID" value="AAC67872"/>
    <property type="gene ID" value="CT_279"/>
</dbReference>
<dbReference type="GeneID" id="884846"/>
<dbReference type="KEGG" id="ctr:CT_279"/>
<dbReference type="PATRIC" id="fig|272561.5.peg.298"/>
<dbReference type="HOGENOM" id="CLU_870677_0_0_0"/>
<dbReference type="InParanoid" id="O84281"/>
<dbReference type="OrthoDB" id="9794010at2"/>
<dbReference type="Proteomes" id="UP000000431">
    <property type="component" value="Chromosome"/>
</dbReference>
<dbReference type="GO" id="GO:0005886">
    <property type="term" value="C:plasma membrane"/>
    <property type="evidence" value="ECO:0007669"/>
    <property type="project" value="UniProtKB-SubCell"/>
</dbReference>
<dbReference type="GO" id="GO:0010181">
    <property type="term" value="F:FMN binding"/>
    <property type="evidence" value="ECO:0007669"/>
    <property type="project" value="UniProtKB-UniRule"/>
</dbReference>
<dbReference type="GO" id="GO:0016655">
    <property type="term" value="F:oxidoreductase activity, acting on NAD(P)H, quinone or similar compound as acceptor"/>
    <property type="evidence" value="ECO:0007669"/>
    <property type="project" value="UniProtKB-UniRule"/>
</dbReference>
<dbReference type="GO" id="GO:0006814">
    <property type="term" value="P:sodium ion transport"/>
    <property type="evidence" value="ECO:0007669"/>
    <property type="project" value="UniProtKB-UniRule"/>
</dbReference>
<dbReference type="HAMAP" id="MF_00427">
    <property type="entry name" value="NqrC"/>
    <property type="match status" value="1"/>
</dbReference>
<dbReference type="InterPro" id="IPR007329">
    <property type="entry name" value="FMN-bd"/>
</dbReference>
<dbReference type="InterPro" id="IPR010204">
    <property type="entry name" value="NqrC"/>
</dbReference>
<dbReference type="NCBIfam" id="TIGR01938">
    <property type="entry name" value="nqrC"/>
    <property type="match status" value="1"/>
</dbReference>
<dbReference type="NCBIfam" id="NF003752">
    <property type="entry name" value="PRK05346.2-3"/>
    <property type="match status" value="1"/>
</dbReference>
<dbReference type="PANTHER" id="PTHR37838">
    <property type="entry name" value="NA(+)-TRANSLOCATING NADH-QUINONE REDUCTASE SUBUNIT C"/>
    <property type="match status" value="1"/>
</dbReference>
<dbReference type="PANTHER" id="PTHR37838:SF1">
    <property type="entry name" value="NA(+)-TRANSLOCATING NADH-QUINONE REDUCTASE SUBUNIT C"/>
    <property type="match status" value="1"/>
</dbReference>
<dbReference type="Pfam" id="PF04205">
    <property type="entry name" value="FMN_bind"/>
    <property type="match status" value="1"/>
</dbReference>
<dbReference type="PIRSF" id="PIRSF009437">
    <property type="entry name" value="NQR-1_subunit_C"/>
    <property type="match status" value="1"/>
</dbReference>
<dbReference type="SMART" id="SM00900">
    <property type="entry name" value="FMN_bind"/>
    <property type="match status" value="1"/>
</dbReference>
<feature type="chain" id="PRO_0000214214" description="Na(+)-translocating NADH-quinone reductase subunit C">
    <location>
        <begin position="1"/>
        <end position="316"/>
    </location>
</feature>
<feature type="transmembrane region" description="Helical" evidence="1">
    <location>
        <begin position="13"/>
        <end position="33"/>
    </location>
</feature>
<feature type="modified residue" description="FMN phosphoryl threonine" evidence="1">
    <location>
        <position position="280"/>
    </location>
</feature>
<sequence length="316" mass="34412">MASKSRHYLNQPWYIILFIFVLSLIAGTLLSSVYYVLAPIQQQAAEFDRNQQMLMAAQVISSDNTFQVYEKGDWHPALYNTKKQLLEISSTPPKVTVTTLSSYFQNFVRVLLTDTQGNLSSFEDHNLNLEEFLSQPTPVIHGLALYVVYAILHNDAASSKLSASQVAKNPTAIESIVLPIEGFGLWGPIYGFLALEKDGNTVLGTSWYQHGETPGLGANIANPQWQKNFRGKKVFLVSASGETDFAKTTLGLEVIKGSVSAALGDSPKAASSIDGISGATLTCNGVTESFSHSLAPYRALLTFFANSKPSGESHDH</sequence>
<gene>
    <name evidence="1" type="primary">nqrC</name>
    <name type="synonym">nqr3</name>
    <name type="ordered locus">CT_279</name>
</gene>
<accession>O84281</accession>
<name>NQRC_CHLTR</name>
<evidence type="ECO:0000255" key="1">
    <source>
        <dbReference type="HAMAP-Rule" id="MF_00427"/>
    </source>
</evidence>
<comment type="function">
    <text evidence="1">NQR complex catalyzes the reduction of ubiquinone-1 to ubiquinol by two successive reactions, coupled with the transport of Na(+) ions from the cytoplasm to the periplasm. NqrA to NqrE are probably involved in the second step, the conversion of ubisemiquinone to ubiquinol.</text>
</comment>
<comment type="catalytic activity">
    <reaction evidence="1">
        <text>a ubiquinone + n Na(+)(in) + NADH + H(+) = a ubiquinol + n Na(+)(out) + NAD(+)</text>
        <dbReference type="Rhea" id="RHEA:47748"/>
        <dbReference type="Rhea" id="RHEA-COMP:9565"/>
        <dbReference type="Rhea" id="RHEA-COMP:9566"/>
        <dbReference type="ChEBI" id="CHEBI:15378"/>
        <dbReference type="ChEBI" id="CHEBI:16389"/>
        <dbReference type="ChEBI" id="CHEBI:17976"/>
        <dbReference type="ChEBI" id="CHEBI:29101"/>
        <dbReference type="ChEBI" id="CHEBI:57540"/>
        <dbReference type="ChEBI" id="CHEBI:57945"/>
        <dbReference type="EC" id="7.2.1.1"/>
    </reaction>
</comment>
<comment type="cofactor">
    <cofactor evidence="1">
        <name>FMN</name>
        <dbReference type="ChEBI" id="CHEBI:58210"/>
    </cofactor>
</comment>
<comment type="subunit">
    <text evidence="1">Composed of six subunits; NqrA, NqrB, NqrC, NqrD, NqrE and NqrF.</text>
</comment>
<comment type="subcellular location">
    <subcellularLocation>
        <location evidence="1">Cell inner membrane</location>
        <topology evidence="1">Single-pass membrane protein</topology>
    </subcellularLocation>
</comment>
<comment type="similarity">
    <text evidence="1">Belongs to the NqrC family.</text>
</comment>
<organism>
    <name type="scientific">Chlamydia trachomatis serovar D (strain ATCC VR-885 / DSM 19411 / UW-3/Cx)</name>
    <dbReference type="NCBI Taxonomy" id="272561"/>
    <lineage>
        <taxon>Bacteria</taxon>
        <taxon>Pseudomonadati</taxon>
        <taxon>Chlamydiota</taxon>
        <taxon>Chlamydiia</taxon>
        <taxon>Chlamydiales</taxon>
        <taxon>Chlamydiaceae</taxon>
        <taxon>Chlamydia/Chlamydophila group</taxon>
        <taxon>Chlamydia</taxon>
    </lineage>
</organism>
<keyword id="KW-0997">Cell inner membrane</keyword>
<keyword id="KW-1003">Cell membrane</keyword>
<keyword id="KW-0285">Flavoprotein</keyword>
<keyword id="KW-0288">FMN</keyword>
<keyword id="KW-0406">Ion transport</keyword>
<keyword id="KW-0472">Membrane</keyword>
<keyword id="KW-0520">NAD</keyword>
<keyword id="KW-0597">Phosphoprotein</keyword>
<keyword id="KW-1185">Reference proteome</keyword>
<keyword id="KW-0915">Sodium</keyword>
<keyword id="KW-0739">Sodium transport</keyword>
<keyword id="KW-1278">Translocase</keyword>
<keyword id="KW-0812">Transmembrane</keyword>
<keyword id="KW-1133">Transmembrane helix</keyword>
<keyword id="KW-0813">Transport</keyword>
<keyword id="KW-0830">Ubiquinone</keyword>
<proteinExistence type="inferred from homology"/>
<protein>
    <recommendedName>
        <fullName evidence="1">Na(+)-translocating NADH-quinone reductase subunit C</fullName>
        <shortName evidence="1">Na(+)-NQR subunit C</shortName>
        <shortName evidence="1">Na(+)-translocating NQR subunit C</shortName>
        <ecNumber evidence="1">7.2.1.1</ecNumber>
    </recommendedName>
    <alternativeName>
        <fullName evidence="1">NQR complex subunit C</fullName>
    </alternativeName>
    <alternativeName>
        <fullName evidence="1">NQR-1 subunit C</fullName>
    </alternativeName>
</protein>
<reference key="1">
    <citation type="journal article" date="1998" name="Science">
        <title>Genome sequence of an obligate intracellular pathogen of humans: Chlamydia trachomatis.</title>
        <authorList>
            <person name="Stephens R.S."/>
            <person name="Kalman S."/>
            <person name="Lammel C.J."/>
            <person name="Fan J."/>
            <person name="Marathe R."/>
            <person name="Aravind L."/>
            <person name="Mitchell W.P."/>
            <person name="Olinger L."/>
            <person name="Tatusov R.L."/>
            <person name="Zhao Q."/>
            <person name="Koonin E.V."/>
            <person name="Davis R.W."/>
        </authorList>
    </citation>
    <scope>NUCLEOTIDE SEQUENCE [LARGE SCALE GENOMIC DNA]</scope>
    <source>
        <strain>ATCC VR-885 / DSM 19411 / UW-3/Cx</strain>
    </source>
</reference>